<protein>
    <recommendedName>
        <fullName evidence="1">Erythronate-4-phosphate dehydrogenase</fullName>
        <ecNumber evidence="1">1.1.1.290</ecNumber>
    </recommendedName>
</protein>
<name>PDXB_SHESR</name>
<evidence type="ECO:0000255" key="1">
    <source>
        <dbReference type="HAMAP-Rule" id="MF_01825"/>
    </source>
</evidence>
<comment type="function">
    <text evidence="1">Catalyzes the oxidation of erythronate-4-phosphate to 3-hydroxy-2-oxo-4-phosphonooxybutanoate.</text>
</comment>
<comment type="catalytic activity">
    <reaction evidence="1">
        <text>4-phospho-D-erythronate + NAD(+) = (R)-3-hydroxy-2-oxo-4-phosphooxybutanoate + NADH + H(+)</text>
        <dbReference type="Rhea" id="RHEA:18829"/>
        <dbReference type="ChEBI" id="CHEBI:15378"/>
        <dbReference type="ChEBI" id="CHEBI:57540"/>
        <dbReference type="ChEBI" id="CHEBI:57945"/>
        <dbReference type="ChEBI" id="CHEBI:58538"/>
        <dbReference type="ChEBI" id="CHEBI:58766"/>
        <dbReference type="EC" id="1.1.1.290"/>
    </reaction>
</comment>
<comment type="pathway">
    <text evidence="1">Cofactor biosynthesis; pyridoxine 5'-phosphate biosynthesis; pyridoxine 5'-phosphate from D-erythrose 4-phosphate: step 2/5.</text>
</comment>
<comment type="subunit">
    <text evidence="1">Homodimer.</text>
</comment>
<comment type="subcellular location">
    <subcellularLocation>
        <location evidence="1">Cytoplasm</location>
    </subcellularLocation>
</comment>
<comment type="similarity">
    <text evidence="1">Belongs to the D-isomer specific 2-hydroxyacid dehydrogenase family. PdxB subfamily.</text>
</comment>
<reference key="1">
    <citation type="submission" date="2006-08" db="EMBL/GenBank/DDBJ databases">
        <title>Complete sequence of chromosome 1 of Shewanella sp. MR-7.</title>
        <authorList>
            <person name="Copeland A."/>
            <person name="Lucas S."/>
            <person name="Lapidus A."/>
            <person name="Barry K."/>
            <person name="Detter J.C."/>
            <person name="Glavina del Rio T."/>
            <person name="Hammon N."/>
            <person name="Israni S."/>
            <person name="Dalin E."/>
            <person name="Tice H."/>
            <person name="Pitluck S."/>
            <person name="Kiss H."/>
            <person name="Brettin T."/>
            <person name="Bruce D."/>
            <person name="Han C."/>
            <person name="Tapia R."/>
            <person name="Gilna P."/>
            <person name="Schmutz J."/>
            <person name="Larimer F."/>
            <person name="Land M."/>
            <person name="Hauser L."/>
            <person name="Kyrpides N."/>
            <person name="Mikhailova N."/>
            <person name="Nealson K."/>
            <person name="Konstantinidis K."/>
            <person name="Klappenbach J."/>
            <person name="Tiedje J."/>
            <person name="Richardson P."/>
        </authorList>
    </citation>
    <scope>NUCLEOTIDE SEQUENCE [LARGE SCALE GENOMIC DNA]</scope>
    <source>
        <strain>MR-7</strain>
    </source>
</reference>
<accession>Q0HWL8</accession>
<proteinExistence type="inferred from homology"/>
<sequence>MKIVVDENMPYVEPLFGALGEIIPVNGRTLTPEQVQDADVLLVRSVTRVNAALLDANPKLKFVGSATIGTDHVDLAYLAGRGIPFSNAPGCNATAVGEFAFIAMLELAARFNSPLKGKVVGIVGAGNTGSATAKCLEAYGIKVLLNDPIKAAEGDPRHFVSLETLLLEADIISLHVPITRSGEHKTLHLFDEARLMSLKPNIWLVNCCRGDVIDNQALIKVKKQRDDLKLVLDVWEGEPHPMPELVPFAEFATPHIAGYSLEGKARGTFMLYQKLCELLAIPANKRLSELLPPFHFKAVELEQTPDEKALLQLARFVYDLRDDDAVFRNGFARSNGFDTMRKNHKHRREFSALALAYHGQSEVDWLSNLGFSGVGR</sequence>
<feature type="chain" id="PRO_0000297471" description="Erythronate-4-phosphate dehydrogenase">
    <location>
        <begin position="1"/>
        <end position="376"/>
    </location>
</feature>
<feature type="active site" evidence="1">
    <location>
        <position position="209"/>
    </location>
</feature>
<feature type="active site" evidence="1">
    <location>
        <position position="238"/>
    </location>
</feature>
<feature type="active site" description="Proton donor" evidence="1">
    <location>
        <position position="255"/>
    </location>
</feature>
<feature type="binding site" evidence="1">
    <location>
        <position position="45"/>
    </location>
    <ligand>
        <name>substrate</name>
    </ligand>
</feature>
<feature type="binding site" evidence="1">
    <location>
        <position position="67"/>
    </location>
    <ligand>
        <name>substrate</name>
    </ligand>
</feature>
<feature type="binding site" evidence="1">
    <location>
        <position position="147"/>
    </location>
    <ligand>
        <name>NAD(+)</name>
        <dbReference type="ChEBI" id="CHEBI:57540"/>
    </ligand>
</feature>
<feature type="binding site" evidence="1">
    <location>
        <position position="233"/>
    </location>
    <ligand>
        <name>NAD(+)</name>
        <dbReference type="ChEBI" id="CHEBI:57540"/>
    </ligand>
</feature>
<feature type="binding site" evidence="1">
    <location>
        <position position="258"/>
    </location>
    <ligand>
        <name>NAD(+)</name>
        <dbReference type="ChEBI" id="CHEBI:57540"/>
    </ligand>
</feature>
<feature type="binding site" evidence="1">
    <location>
        <position position="259"/>
    </location>
    <ligand>
        <name>substrate</name>
    </ligand>
</feature>
<gene>
    <name evidence="1" type="primary">pdxB</name>
    <name type="ordered locus">Shewmr7_1488</name>
</gene>
<dbReference type="EC" id="1.1.1.290" evidence="1"/>
<dbReference type="EMBL" id="CP000444">
    <property type="protein sequence ID" value="ABI42487.1"/>
    <property type="molecule type" value="Genomic_DNA"/>
</dbReference>
<dbReference type="SMR" id="Q0HWL8"/>
<dbReference type="KEGG" id="shm:Shewmr7_1488"/>
<dbReference type="HOGENOM" id="CLU_019796_4_0_6"/>
<dbReference type="UniPathway" id="UPA00244">
    <property type="reaction ID" value="UER00310"/>
</dbReference>
<dbReference type="GO" id="GO:0005737">
    <property type="term" value="C:cytoplasm"/>
    <property type="evidence" value="ECO:0007669"/>
    <property type="project" value="UniProtKB-SubCell"/>
</dbReference>
<dbReference type="GO" id="GO:0033711">
    <property type="term" value="F:4-phosphoerythronate dehydrogenase activity"/>
    <property type="evidence" value="ECO:0007669"/>
    <property type="project" value="UniProtKB-EC"/>
</dbReference>
<dbReference type="GO" id="GO:0051287">
    <property type="term" value="F:NAD binding"/>
    <property type="evidence" value="ECO:0007669"/>
    <property type="project" value="InterPro"/>
</dbReference>
<dbReference type="GO" id="GO:0046983">
    <property type="term" value="F:protein dimerization activity"/>
    <property type="evidence" value="ECO:0007669"/>
    <property type="project" value="InterPro"/>
</dbReference>
<dbReference type="GO" id="GO:0008615">
    <property type="term" value="P:pyridoxine biosynthetic process"/>
    <property type="evidence" value="ECO:0007669"/>
    <property type="project" value="UniProtKB-UniRule"/>
</dbReference>
<dbReference type="CDD" id="cd12158">
    <property type="entry name" value="ErythrP_dh"/>
    <property type="match status" value="1"/>
</dbReference>
<dbReference type="Gene3D" id="3.30.1370.170">
    <property type="match status" value="1"/>
</dbReference>
<dbReference type="Gene3D" id="3.40.50.720">
    <property type="entry name" value="NAD(P)-binding Rossmann-like Domain"/>
    <property type="match status" value="2"/>
</dbReference>
<dbReference type="HAMAP" id="MF_01825">
    <property type="entry name" value="PdxB"/>
    <property type="match status" value="1"/>
</dbReference>
<dbReference type="InterPro" id="IPR050418">
    <property type="entry name" value="D-iso_2-hydroxyacid_DH_PdxB"/>
</dbReference>
<dbReference type="InterPro" id="IPR006139">
    <property type="entry name" value="D-isomer_2_OHA_DH_cat_dom"/>
</dbReference>
<dbReference type="InterPro" id="IPR029753">
    <property type="entry name" value="D-isomer_DH_CS"/>
</dbReference>
<dbReference type="InterPro" id="IPR006140">
    <property type="entry name" value="D-isomer_DH_NAD-bd"/>
</dbReference>
<dbReference type="InterPro" id="IPR020921">
    <property type="entry name" value="Erythronate-4-P_DHase"/>
</dbReference>
<dbReference type="InterPro" id="IPR024531">
    <property type="entry name" value="Erythronate-4-P_DHase_dimer"/>
</dbReference>
<dbReference type="InterPro" id="IPR036291">
    <property type="entry name" value="NAD(P)-bd_dom_sf"/>
</dbReference>
<dbReference type="InterPro" id="IPR038251">
    <property type="entry name" value="PdxB_dimer_sf"/>
</dbReference>
<dbReference type="PANTHER" id="PTHR43761:SF1">
    <property type="entry name" value="D-ISOMER SPECIFIC 2-HYDROXYACID DEHYDROGENASE CATALYTIC DOMAIN-CONTAINING PROTEIN-RELATED"/>
    <property type="match status" value="1"/>
</dbReference>
<dbReference type="PANTHER" id="PTHR43761">
    <property type="entry name" value="D-ISOMER SPECIFIC 2-HYDROXYACID DEHYDROGENASE FAMILY PROTEIN (AFU_ORTHOLOGUE AFUA_1G13630)"/>
    <property type="match status" value="1"/>
</dbReference>
<dbReference type="Pfam" id="PF00389">
    <property type="entry name" value="2-Hacid_dh"/>
    <property type="match status" value="1"/>
</dbReference>
<dbReference type="Pfam" id="PF02826">
    <property type="entry name" value="2-Hacid_dh_C"/>
    <property type="match status" value="1"/>
</dbReference>
<dbReference type="Pfam" id="PF11890">
    <property type="entry name" value="DUF3410"/>
    <property type="match status" value="1"/>
</dbReference>
<dbReference type="SUPFAM" id="SSF52283">
    <property type="entry name" value="Formate/glycerate dehydrogenase catalytic domain-like"/>
    <property type="match status" value="1"/>
</dbReference>
<dbReference type="SUPFAM" id="SSF51735">
    <property type="entry name" value="NAD(P)-binding Rossmann-fold domains"/>
    <property type="match status" value="1"/>
</dbReference>
<dbReference type="PROSITE" id="PS00671">
    <property type="entry name" value="D_2_HYDROXYACID_DH_3"/>
    <property type="match status" value="1"/>
</dbReference>
<keyword id="KW-0963">Cytoplasm</keyword>
<keyword id="KW-0520">NAD</keyword>
<keyword id="KW-0560">Oxidoreductase</keyword>
<keyword id="KW-0664">Pyridoxine biosynthesis</keyword>
<organism>
    <name type="scientific">Shewanella sp. (strain MR-7)</name>
    <dbReference type="NCBI Taxonomy" id="60481"/>
    <lineage>
        <taxon>Bacteria</taxon>
        <taxon>Pseudomonadati</taxon>
        <taxon>Pseudomonadota</taxon>
        <taxon>Gammaproteobacteria</taxon>
        <taxon>Alteromonadales</taxon>
        <taxon>Shewanellaceae</taxon>
        <taxon>Shewanella</taxon>
    </lineage>
</organism>